<keyword id="KW-1185">Reference proteome</keyword>
<organism>
    <name type="scientific">Methanocorpusculum labreanum (strain ATCC 43576 / DSM 4855 / Z)</name>
    <dbReference type="NCBI Taxonomy" id="410358"/>
    <lineage>
        <taxon>Archaea</taxon>
        <taxon>Methanobacteriati</taxon>
        <taxon>Methanobacteriota</taxon>
        <taxon>Stenosarchaea group</taxon>
        <taxon>Methanomicrobia</taxon>
        <taxon>Methanomicrobiales</taxon>
        <taxon>Methanocorpusculaceae</taxon>
        <taxon>Methanocorpusculum</taxon>
    </lineage>
</organism>
<sequence>MIREKFAYRETITTILADDTSHVEAAKGGMIAARTGVEEYLLTDPFFQMSYSPVSAPADAPESVRCMAAASFEADVGPMAAVAATIGWAGVKAMQNRGAAFGLIDNGGDIVLFSNRELRVGIYAGPAPSSGKFAFLITPQTEILGICTSSATVGPSVSFGIADSVTCFSHDPAKADAWATGLCNILTPENFDKVMKKVEESSVFAVYAVIGDWIGRWGDLPEIVPAHVSYDLITKG</sequence>
<proteinExistence type="inferred from homology"/>
<feature type="chain" id="PRO_0000366707" description="UPF0280 protein Mlab_0453">
    <location>
        <begin position="1"/>
        <end position="236"/>
    </location>
</feature>
<evidence type="ECO:0000255" key="1">
    <source>
        <dbReference type="HAMAP-Rule" id="MF_01079"/>
    </source>
</evidence>
<name>Y453_METLZ</name>
<gene>
    <name type="ordered locus">Mlab_0453</name>
</gene>
<comment type="similarity">
    <text evidence="1">Belongs to the UPF0280 family.</text>
</comment>
<accession>A2SQM1</accession>
<reference key="1">
    <citation type="journal article" date="2009" name="Stand. Genomic Sci.">
        <title>Complete genome sequence of Methanocorpusculum labreanum type strain Z.</title>
        <authorList>
            <person name="Anderson I.J."/>
            <person name="Sieprawska-Lupa M."/>
            <person name="Goltsman E."/>
            <person name="Lapidus A."/>
            <person name="Copeland A."/>
            <person name="Glavina Del Rio T."/>
            <person name="Tice H."/>
            <person name="Dalin E."/>
            <person name="Barry K."/>
            <person name="Pitluck S."/>
            <person name="Hauser L."/>
            <person name="Land M."/>
            <person name="Lucas S."/>
            <person name="Richardson P."/>
            <person name="Whitman W.B."/>
            <person name="Kyrpides N.C."/>
        </authorList>
    </citation>
    <scope>NUCLEOTIDE SEQUENCE [LARGE SCALE GENOMIC DNA]</scope>
    <source>
        <strain>ATCC 43576 / DSM 4855 / Z</strain>
    </source>
</reference>
<protein>
    <recommendedName>
        <fullName evidence="1">UPF0280 protein Mlab_0453</fullName>
    </recommendedName>
</protein>
<dbReference type="EMBL" id="CP000559">
    <property type="protein sequence ID" value="ABN06627.1"/>
    <property type="molecule type" value="Genomic_DNA"/>
</dbReference>
<dbReference type="RefSeq" id="WP_011832828.1">
    <property type="nucleotide sequence ID" value="NC_008942.1"/>
</dbReference>
<dbReference type="SMR" id="A2SQM1"/>
<dbReference type="STRING" id="410358.Mlab_0453"/>
<dbReference type="GeneID" id="4794907"/>
<dbReference type="KEGG" id="mla:Mlab_0453"/>
<dbReference type="eggNOG" id="arCOG04376">
    <property type="taxonomic scope" value="Archaea"/>
</dbReference>
<dbReference type="HOGENOM" id="CLU_074757_0_0_2"/>
<dbReference type="OrthoDB" id="50299at2157"/>
<dbReference type="Proteomes" id="UP000000365">
    <property type="component" value="Chromosome"/>
</dbReference>
<dbReference type="Gene3D" id="3.10.520.10">
    <property type="entry name" value="ApbE-like domains"/>
    <property type="match status" value="1"/>
</dbReference>
<dbReference type="HAMAP" id="MF_01079">
    <property type="entry name" value="UPF0280"/>
    <property type="match status" value="1"/>
</dbReference>
<dbReference type="InterPro" id="IPR003374">
    <property type="entry name" value="ApbE-like_sf"/>
</dbReference>
<dbReference type="InterPro" id="IPR037456">
    <property type="entry name" value="MA1715-like"/>
</dbReference>
<dbReference type="InterPro" id="IPR007183">
    <property type="entry name" value="UPF0280"/>
</dbReference>
<dbReference type="NCBIfam" id="NF003324">
    <property type="entry name" value="PRK04334.1-4"/>
    <property type="match status" value="1"/>
</dbReference>
<dbReference type="PIRSF" id="PIRSF006421">
    <property type="entry name" value="UCP006421"/>
    <property type="match status" value="1"/>
</dbReference>
<dbReference type="SUPFAM" id="SSF143631">
    <property type="entry name" value="ApbE-like"/>
    <property type="match status" value="1"/>
</dbReference>